<sequence length="329" mass="39176">MPWWTDALYWLPRGVSWSDMYNKTTEPGYMYPHYSHLWMTVLTGISLIIYRFVFENYIFVPLAHFLSRKNPPETRRGTLDREKKYSRMAECAMRALYYTISFVCGLYLVLHESHLYDITECWRNWPFHPIPNAVAWYYWIQGGFYIALVFGILFLDAKRSDFWQMLVHHFITLALIGVSWTMNMVRVGTLILVSHDAVDILIDVGKILRYEQFETALTICFAGVLFVWVATRLVYYPFWIIRSVWFDAPALIQDDYEWLNFDQQPQAPRFIMLLLTALLILHIFWAYILFKIAYDTIQEGVVDDVREDFDEQSLVNREKAKQQNKNKDD</sequence>
<dbReference type="EC" id="2.3.1.297" evidence="4 6"/>
<dbReference type="EMBL" id="FO081023">
    <property type="protein sequence ID" value="CCD68564.1"/>
    <property type="molecule type" value="Genomic_DNA"/>
</dbReference>
<dbReference type="RefSeq" id="NP_508803.3">
    <property type="nucleotide sequence ID" value="NM_076402.6"/>
</dbReference>
<dbReference type="SMR" id="Q7Z139"/>
<dbReference type="FunCoup" id="Q7Z139">
    <property type="interactions" value="3228"/>
</dbReference>
<dbReference type="STRING" id="6239.K02G10.6.1"/>
<dbReference type="SwissLipids" id="SLP:000000003"/>
<dbReference type="SwissLipids" id="SLP:000000184"/>
<dbReference type="SwissLipids" id="SLP:000000185"/>
<dbReference type="SwissLipids" id="SLP:000000195"/>
<dbReference type="GlyCosmos" id="Q7Z139">
    <property type="glycosylation" value="1 site, No reported glycans"/>
</dbReference>
<dbReference type="iPTMnet" id="Q7Z139"/>
<dbReference type="PaxDb" id="6239-K02G10.6"/>
<dbReference type="PeptideAtlas" id="Q7Z139"/>
<dbReference type="EnsemblMetazoa" id="K02G10.6.1">
    <property type="protein sequence ID" value="K02G10.6.1"/>
    <property type="gene ID" value="WBGene00002044"/>
</dbReference>
<dbReference type="GeneID" id="180743"/>
<dbReference type="KEGG" id="cel:CELE_K02G10.6"/>
<dbReference type="UCSC" id="K02G10.6">
    <property type="organism name" value="c. elegans"/>
</dbReference>
<dbReference type="AGR" id="WB:WBGene00002044"/>
<dbReference type="CTD" id="180743"/>
<dbReference type="WormBase" id="K02G10.6">
    <property type="protein sequence ID" value="CE34329"/>
    <property type="gene ID" value="WBGene00002044"/>
    <property type="gene designation" value="hyl-2"/>
</dbReference>
<dbReference type="eggNOG" id="KOG1607">
    <property type="taxonomic scope" value="Eukaryota"/>
</dbReference>
<dbReference type="GeneTree" id="ENSGT01030000234515"/>
<dbReference type="HOGENOM" id="CLU_028277_1_3_1"/>
<dbReference type="InParanoid" id="Q7Z139"/>
<dbReference type="OMA" id="GYPHIPL"/>
<dbReference type="OrthoDB" id="537032at2759"/>
<dbReference type="PhylomeDB" id="Q7Z139"/>
<dbReference type="Reactome" id="R-CEL-1660661">
    <property type="pathway name" value="Sphingolipid de novo biosynthesis"/>
</dbReference>
<dbReference type="UniPathway" id="UPA00222"/>
<dbReference type="PRO" id="PR:Q7Z139"/>
<dbReference type="Proteomes" id="UP000001940">
    <property type="component" value="Chromosome X"/>
</dbReference>
<dbReference type="Bgee" id="WBGene00002044">
    <property type="expression patterns" value="Expressed in embryo and 3 other cell types or tissues"/>
</dbReference>
<dbReference type="GO" id="GO:0016020">
    <property type="term" value="C:membrane"/>
    <property type="evidence" value="ECO:0007669"/>
    <property type="project" value="UniProtKB-SubCell"/>
</dbReference>
<dbReference type="GO" id="GO:0016740">
    <property type="term" value="F:transferase activity"/>
    <property type="evidence" value="ECO:0007669"/>
    <property type="project" value="UniProtKB-KW"/>
</dbReference>
<dbReference type="GO" id="GO:0046513">
    <property type="term" value="P:ceramide biosynthetic process"/>
    <property type="evidence" value="ECO:0000318"/>
    <property type="project" value="GO_Central"/>
</dbReference>
<dbReference type="InterPro" id="IPR016439">
    <property type="entry name" value="Lag1/Lac1-like"/>
</dbReference>
<dbReference type="InterPro" id="IPR006634">
    <property type="entry name" value="TLC-dom"/>
</dbReference>
<dbReference type="PANTHER" id="PTHR12560:SF21">
    <property type="entry name" value="CERAMIDE SYNTHASE HYL-2"/>
    <property type="match status" value="1"/>
</dbReference>
<dbReference type="PANTHER" id="PTHR12560">
    <property type="entry name" value="LONGEVITY ASSURANCE FACTOR 1 LAG1"/>
    <property type="match status" value="1"/>
</dbReference>
<dbReference type="Pfam" id="PF03798">
    <property type="entry name" value="TRAM_LAG1_CLN8"/>
    <property type="match status" value="1"/>
</dbReference>
<dbReference type="PIRSF" id="PIRSF005225">
    <property type="entry name" value="LAG1_LAC1"/>
    <property type="match status" value="1"/>
</dbReference>
<dbReference type="SMART" id="SM00724">
    <property type="entry name" value="TLC"/>
    <property type="match status" value="1"/>
</dbReference>
<dbReference type="PROSITE" id="PS50922">
    <property type="entry name" value="TLC"/>
    <property type="match status" value="1"/>
</dbReference>
<keyword id="KW-0325">Glycoprotein</keyword>
<keyword id="KW-0444">Lipid biosynthesis</keyword>
<keyword id="KW-0443">Lipid metabolism</keyword>
<keyword id="KW-0472">Membrane</keyword>
<keyword id="KW-1185">Reference proteome</keyword>
<keyword id="KW-0746">Sphingolipid metabolism</keyword>
<keyword id="KW-0808">Transferase</keyword>
<keyword id="KW-0812">Transmembrane</keyword>
<keyword id="KW-1133">Transmembrane helix</keyword>
<feature type="chain" id="PRO_0000421292" description="Ceramide synthase hyl-2">
    <location>
        <begin position="1"/>
        <end position="329"/>
    </location>
</feature>
<feature type="transmembrane region" description="Helical" evidence="1">
    <location>
        <begin position="41"/>
        <end position="61"/>
    </location>
</feature>
<feature type="transmembrane region" description="Helical" evidence="1">
    <location>
        <begin position="95"/>
        <end position="115"/>
    </location>
</feature>
<feature type="transmembrane region" description="Helical" evidence="1">
    <location>
        <begin position="134"/>
        <end position="154"/>
    </location>
</feature>
<feature type="transmembrane region" description="Helical" evidence="1">
    <location>
        <begin position="162"/>
        <end position="182"/>
    </location>
</feature>
<feature type="transmembrane region" description="Helical" evidence="1">
    <location>
        <begin position="187"/>
        <end position="207"/>
    </location>
</feature>
<feature type="transmembrane region" description="Helical" evidence="1">
    <location>
        <begin position="221"/>
        <end position="241"/>
    </location>
</feature>
<feature type="transmembrane region" description="Helical" evidence="1">
    <location>
        <begin position="270"/>
        <end position="290"/>
    </location>
</feature>
<feature type="domain" description="TLC" evidence="2">
    <location>
        <begin position="86"/>
        <end position="298"/>
    </location>
</feature>
<feature type="glycosylation site" description="N-linked (GlcNAc...) asparagine" evidence="3">
    <location>
        <position position="22"/>
    </location>
</feature>
<feature type="mutagenesis site" description="In allele hyl-2(gnv1); abrogates ceramide synthase activity and increases sensitivity to anoxia." evidence="4">
    <original>HH</original>
    <variation>QY</variation>
    <location>
        <begin position="168"/>
        <end position="169"/>
    </location>
</feature>
<evidence type="ECO:0000255" key="1"/>
<evidence type="ECO:0000255" key="2">
    <source>
        <dbReference type="PROSITE-ProRule" id="PRU00205"/>
    </source>
</evidence>
<evidence type="ECO:0000269" key="3">
    <source>
    </source>
</evidence>
<evidence type="ECO:0000269" key="4">
    <source>
    </source>
</evidence>
<evidence type="ECO:0000269" key="5">
    <source>
    </source>
</evidence>
<evidence type="ECO:0000269" key="6">
    <source>
    </source>
</evidence>
<evidence type="ECO:0000303" key="7">
    <source>
    </source>
</evidence>
<evidence type="ECO:0000305" key="8"/>
<evidence type="ECO:0000305" key="9">
    <source>
    </source>
</evidence>
<evidence type="ECO:0000305" key="10">
    <source>
    </source>
</evidence>
<reference key="1">
    <citation type="journal article" date="1998" name="Science">
        <title>Genome sequence of the nematode C. elegans: a platform for investigating biology.</title>
        <authorList>
            <consortium name="The C. elegans sequencing consortium"/>
        </authorList>
    </citation>
    <scope>NUCLEOTIDE SEQUENCE [LARGE SCALE GENOMIC DNA]</scope>
    <source>
        <strain>Bristol N2</strain>
    </source>
</reference>
<reference key="2">
    <citation type="journal article" date="2007" name="Mol. Cell. Proteomics">
        <title>Proteomics reveals N-linked glycoprotein diversity in Caenorhabditis elegans and suggests an atypical translocation mechanism for integral membrane proteins.</title>
        <authorList>
            <person name="Kaji H."/>
            <person name="Kamiie J."/>
            <person name="Kawakami H."/>
            <person name="Kido K."/>
            <person name="Yamauchi Y."/>
            <person name="Shinkawa T."/>
            <person name="Taoka M."/>
            <person name="Takahashi N."/>
            <person name="Isobe T."/>
        </authorList>
    </citation>
    <scope>GLYCOSYLATION [LARGE SCALE ANALYSIS] AT ASN-22</scope>
    <scope>IDENTIFICATION BY MASS SPECTROMETRY</scope>
    <source>
        <strain>Bristol N2</strain>
    </source>
</reference>
<reference key="3">
    <citation type="journal article" date="2009" name="Science">
        <title>Protection of C. elegans from anoxia by HYL-2 ceramide synthase.</title>
        <authorList>
            <person name="Menuz V."/>
            <person name="Howell K.S."/>
            <person name="Gentina S."/>
            <person name="Epstein S."/>
            <person name="Riezman I."/>
            <person name="Fornallaz-Mulhauser M."/>
            <person name="Hengartner M.O."/>
            <person name="Gomez M."/>
            <person name="Riezman H."/>
            <person name="Martinou J.C."/>
        </authorList>
    </citation>
    <scope>FUNCTION</scope>
    <scope>CATALYTIC ACTIVITY</scope>
    <scope>PATHWAY</scope>
    <scope>TISSUE SPECIFICITY</scope>
    <scope>DISRUPTION PHENOTYPE</scope>
    <scope>MUTAGENESIS OF 168-HIS-HIS-169</scope>
</reference>
<reference key="4">
    <citation type="journal article" date="2017" name="Chem. Sci.">
        <title>Structure and conserved function of iso-branched sphingoid bases from the nematode Caenorhabditis elegans.</title>
        <authorList>
            <person name="Hannich J.T."/>
            <person name="Mellal D."/>
            <person name="Feng S."/>
            <person name="Zumbuehl A."/>
            <person name="Riezman H."/>
        </authorList>
    </citation>
    <scope>FUNCTION</scope>
</reference>
<reference key="5">
    <citation type="journal article" date="2024" name="J. Biol. Chem.">
        <title>Loss of the ceramide synthase HYL-2 from Caenorhabditis elegans impairs stress responses and alters sphingolipid composition.</title>
        <authorList>
            <person name="Zhu H."/>
            <person name="You Y."/>
            <person name="Yu B."/>
            <person name="Deng Z."/>
            <person name="Liu M."/>
            <person name="Hu Z."/>
            <person name="Duan J."/>
        </authorList>
    </citation>
    <scope>FUNCTION</scope>
</reference>
<comment type="function">
    <text evidence="4 5 6 9">Catalyzes the acylation of sphingoid bases to form ceramides, which are key players in cell signaling events such as tolerances to heat, oxidation, and ultraviolet stress (PubMed:19372430, PubMed:38677510). C.elegans contain specific sphingoid bases, which are unique or different in structure compared to the sphingoid bases found in other animals. Two examples of these distinctive compounds are: 15-methylhexadecasphinganine and 15-methylhexadecasphing-4-enine (PubMed:30155209). Exhibits substrate preference for long and very long fatty acyl-coA chains (C20-23) (PubMed:19372430, PubMed:38677510). Required for adaptation of the nematode to anoxia (PubMed:19372430). Anoxia tolerance may require one or more of the ceramide species that are either specifically or preferentially synthesized by HYL-2, and seems to be affected by a pathway that is parallel to that involving daf-2 (Probable).</text>
</comment>
<comment type="catalytic activity">
    <reaction evidence="4 6">
        <text>a very long-chain fatty acyl-CoA + a sphingoid base = an N-(very-long-chain fatty acyl)-sphingoid base + CoA + H(+)</text>
        <dbReference type="Rhea" id="RHEA:61480"/>
        <dbReference type="ChEBI" id="CHEBI:15378"/>
        <dbReference type="ChEBI" id="CHEBI:57287"/>
        <dbReference type="ChEBI" id="CHEBI:84410"/>
        <dbReference type="ChEBI" id="CHEBI:138261"/>
        <dbReference type="ChEBI" id="CHEBI:144712"/>
        <dbReference type="EC" id="2.3.1.297"/>
    </reaction>
    <physiologicalReaction direction="left-to-right" evidence="9 10">
        <dbReference type="Rhea" id="RHEA:61481"/>
    </physiologicalReaction>
</comment>
<comment type="catalytic activity">
    <reaction evidence="4">
        <text>a fatty acyl-CoA + sphinganine = an N-acylsphinganine + CoA + H(+)</text>
        <dbReference type="Rhea" id="RHEA:34735"/>
        <dbReference type="ChEBI" id="CHEBI:15378"/>
        <dbReference type="ChEBI" id="CHEBI:31488"/>
        <dbReference type="ChEBI" id="CHEBI:57287"/>
        <dbReference type="ChEBI" id="CHEBI:57817"/>
        <dbReference type="ChEBI" id="CHEBI:77636"/>
    </reaction>
    <physiologicalReaction direction="left-to-right" evidence="4">
        <dbReference type="Rhea" id="RHEA:34736"/>
    </physiologicalReaction>
</comment>
<comment type="catalytic activity">
    <reaction evidence="4">
        <text>docosanoyl-CoA + sphinganine = N-docosanoylsphinganine + CoA + H(+)</text>
        <dbReference type="Rhea" id="RHEA:36535"/>
        <dbReference type="ChEBI" id="CHEBI:15378"/>
        <dbReference type="ChEBI" id="CHEBI:57287"/>
        <dbReference type="ChEBI" id="CHEBI:57817"/>
        <dbReference type="ChEBI" id="CHEBI:65059"/>
        <dbReference type="ChEBI" id="CHEBI:67021"/>
    </reaction>
    <physiologicalReaction direction="left-to-right" evidence="4">
        <dbReference type="Rhea" id="RHEA:36536"/>
    </physiologicalReaction>
</comment>
<comment type="catalytic activity">
    <reaction evidence="4">
        <text>sphinganine + tetradecanoyl-CoA = N-(tetradecanoyl)-sphinganine + CoA + H(+)</text>
        <dbReference type="Rhea" id="RHEA:36571"/>
        <dbReference type="ChEBI" id="CHEBI:15378"/>
        <dbReference type="ChEBI" id="CHEBI:57287"/>
        <dbReference type="ChEBI" id="CHEBI:57385"/>
        <dbReference type="ChEBI" id="CHEBI:57817"/>
        <dbReference type="ChEBI" id="CHEBI:67045"/>
    </reaction>
    <physiologicalReaction direction="left-to-right" evidence="4">
        <dbReference type="Rhea" id="RHEA:36572"/>
    </physiologicalReaction>
</comment>
<comment type="catalytic activity">
    <reaction evidence="9">
        <text>eicosanoyl-CoA + sphinganine = N-eicosanoylsphinganine + CoA + H(+)</text>
        <dbReference type="Rhea" id="RHEA:36555"/>
        <dbReference type="ChEBI" id="CHEBI:15378"/>
        <dbReference type="ChEBI" id="CHEBI:57287"/>
        <dbReference type="ChEBI" id="CHEBI:57380"/>
        <dbReference type="ChEBI" id="CHEBI:57817"/>
        <dbReference type="ChEBI" id="CHEBI:67027"/>
    </reaction>
    <physiologicalReaction direction="left-to-right" evidence="9">
        <dbReference type="Rhea" id="RHEA:36556"/>
    </physiologicalReaction>
</comment>
<comment type="catalytic activity">
    <reaction evidence="4">
        <text>15-methylhexadecasphinganine + a fatty acyl-CoA = an N-acyl-15-methylhexadecasphinganine + CoA + H(+)</text>
        <dbReference type="Rhea" id="RHEA:34603"/>
        <dbReference type="ChEBI" id="CHEBI:15378"/>
        <dbReference type="ChEBI" id="CHEBI:57287"/>
        <dbReference type="ChEBI" id="CHEBI:70829"/>
        <dbReference type="ChEBI" id="CHEBI:70845"/>
        <dbReference type="ChEBI" id="CHEBI:77636"/>
    </reaction>
    <physiologicalReaction direction="left-to-right" evidence="4">
        <dbReference type="Rhea" id="RHEA:34604"/>
    </physiologicalReaction>
</comment>
<comment type="pathway">
    <text evidence="4">Lipid metabolism; sphingolipid metabolism.</text>
</comment>
<comment type="subcellular location">
    <subcellularLocation>
        <location evidence="8">Membrane</location>
        <topology evidence="8">Multi-pass membrane protein</topology>
    </subcellularLocation>
</comment>
<comment type="tissue specificity">
    <text evidence="4">Strong expression in the gut, the posterior bulb of the pharynx, the hypoderm, and unidentified cells of the head and the tail.</text>
</comment>
<comment type="disruption phenotype">
    <text evidence="4">Animals deficient in HYL-2 show inability to adapt to oxygen deprivation as a result from the loss of ceramide synthase function.</text>
</comment>
<comment type="similarity">
    <text evidence="8">Belongs to the sphingosine N-acyltransferase family.</text>
</comment>
<proteinExistence type="evidence at protein level"/>
<gene>
    <name type="primary">hyl-2</name>
    <name type="ORF">K02G10.6</name>
</gene>
<accession>Q7Z139</accession>
<organism>
    <name type="scientific">Caenorhabditis elegans</name>
    <dbReference type="NCBI Taxonomy" id="6239"/>
    <lineage>
        <taxon>Eukaryota</taxon>
        <taxon>Metazoa</taxon>
        <taxon>Ecdysozoa</taxon>
        <taxon>Nematoda</taxon>
        <taxon>Chromadorea</taxon>
        <taxon>Rhabditida</taxon>
        <taxon>Rhabditina</taxon>
        <taxon>Rhabditomorpha</taxon>
        <taxon>Rhabditoidea</taxon>
        <taxon>Rhabditidae</taxon>
        <taxon>Peloderinae</taxon>
        <taxon>Caenorhabditis</taxon>
    </lineage>
</organism>
<name>HYL2_CAEEL</name>
<protein>
    <recommendedName>
        <fullName evidence="7">Ceramide synthase hyl-2</fullName>
        <shortName evidence="7">HYL-2</shortName>
        <ecNumber evidence="4 6">2.3.1.297</ecNumber>
    </recommendedName>
</protein>